<reference key="1">
    <citation type="journal article" date="2009" name="PLoS Pathog.">
        <title>Genomic evidence for the evolution of Streptococcus equi: host restriction, increased virulence, and genetic exchange with human pathogens.</title>
        <authorList>
            <person name="Holden M.T.G."/>
            <person name="Heather Z."/>
            <person name="Paillot R."/>
            <person name="Steward K.F."/>
            <person name="Webb K."/>
            <person name="Ainslie F."/>
            <person name="Jourdan T."/>
            <person name="Bason N.C."/>
            <person name="Holroyd N.E."/>
            <person name="Mungall K."/>
            <person name="Quail M.A."/>
            <person name="Sanders M."/>
            <person name="Simmonds M."/>
            <person name="Willey D."/>
            <person name="Brooks K."/>
            <person name="Aanensen D.M."/>
            <person name="Spratt B.G."/>
            <person name="Jolley K.A."/>
            <person name="Maiden M.C.J."/>
            <person name="Kehoe M."/>
            <person name="Chanter N."/>
            <person name="Bentley S.D."/>
            <person name="Robinson C."/>
            <person name="Maskell D.J."/>
            <person name="Parkhill J."/>
            <person name="Waller A.S."/>
        </authorList>
    </citation>
    <scope>NUCLEOTIDE SEQUENCE [LARGE SCALE GENOMIC DNA]</scope>
    <source>
        <strain>4047</strain>
    </source>
</reference>
<accession>C0M6F3</accession>
<evidence type="ECO:0000255" key="1">
    <source>
        <dbReference type="HAMAP-Rule" id="MF_01114"/>
    </source>
</evidence>
<name>RECX_STRE4</name>
<comment type="function">
    <text evidence="1">Modulates RecA activity.</text>
</comment>
<comment type="subcellular location">
    <subcellularLocation>
        <location evidence="1">Cytoplasm</location>
    </subcellularLocation>
</comment>
<comment type="similarity">
    <text evidence="1">Belongs to the RecX family.</text>
</comment>
<gene>
    <name evidence="1" type="primary">recX</name>
    <name type="ordered locus">SEQ_1717</name>
</gene>
<feature type="chain" id="PRO_1000164025" description="Regulatory protein RecX">
    <location>
        <begin position="1"/>
        <end position="258"/>
    </location>
</feature>
<protein>
    <recommendedName>
        <fullName evidence="1">Regulatory protein RecX</fullName>
    </recommendedName>
</protein>
<proteinExistence type="inferred from homology"/>
<keyword id="KW-0963">Cytoplasm</keyword>
<dbReference type="EMBL" id="FM204883">
    <property type="protein sequence ID" value="CAW94789.1"/>
    <property type="molecule type" value="Genomic_DNA"/>
</dbReference>
<dbReference type="RefSeq" id="WP_012679951.1">
    <property type="nucleotide sequence ID" value="NC_012471.1"/>
</dbReference>
<dbReference type="SMR" id="C0M6F3"/>
<dbReference type="KEGG" id="seu:SEQ_1717"/>
<dbReference type="HOGENOM" id="CLU_066607_4_0_9"/>
<dbReference type="OrthoDB" id="5421057at2"/>
<dbReference type="Proteomes" id="UP000001365">
    <property type="component" value="Chromosome"/>
</dbReference>
<dbReference type="GO" id="GO:0005737">
    <property type="term" value="C:cytoplasm"/>
    <property type="evidence" value="ECO:0007669"/>
    <property type="project" value="UniProtKB-SubCell"/>
</dbReference>
<dbReference type="GO" id="GO:0006282">
    <property type="term" value="P:regulation of DNA repair"/>
    <property type="evidence" value="ECO:0007669"/>
    <property type="project" value="UniProtKB-UniRule"/>
</dbReference>
<dbReference type="Gene3D" id="1.10.10.10">
    <property type="entry name" value="Winged helix-like DNA-binding domain superfamily/Winged helix DNA-binding domain"/>
    <property type="match status" value="4"/>
</dbReference>
<dbReference type="HAMAP" id="MF_01114">
    <property type="entry name" value="RecX"/>
    <property type="match status" value="1"/>
</dbReference>
<dbReference type="InterPro" id="IPR053926">
    <property type="entry name" value="RecX_HTH_1st"/>
</dbReference>
<dbReference type="InterPro" id="IPR053924">
    <property type="entry name" value="RecX_HTH_2nd"/>
</dbReference>
<dbReference type="InterPro" id="IPR053925">
    <property type="entry name" value="RecX_HTH_3rd"/>
</dbReference>
<dbReference type="InterPro" id="IPR003783">
    <property type="entry name" value="Regulatory_RecX"/>
</dbReference>
<dbReference type="InterPro" id="IPR036388">
    <property type="entry name" value="WH-like_DNA-bd_sf"/>
</dbReference>
<dbReference type="NCBIfam" id="NF010733">
    <property type="entry name" value="PRK14135.1"/>
    <property type="match status" value="1"/>
</dbReference>
<dbReference type="PANTHER" id="PTHR33602">
    <property type="entry name" value="REGULATORY PROTEIN RECX FAMILY PROTEIN"/>
    <property type="match status" value="1"/>
</dbReference>
<dbReference type="PANTHER" id="PTHR33602:SF1">
    <property type="entry name" value="REGULATORY PROTEIN RECX FAMILY PROTEIN"/>
    <property type="match status" value="1"/>
</dbReference>
<dbReference type="Pfam" id="PF21982">
    <property type="entry name" value="RecX_HTH1"/>
    <property type="match status" value="1"/>
</dbReference>
<dbReference type="Pfam" id="PF02631">
    <property type="entry name" value="RecX_HTH2"/>
    <property type="match status" value="1"/>
</dbReference>
<dbReference type="Pfam" id="PF21981">
    <property type="entry name" value="RecX_HTH3"/>
    <property type="match status" value="2"/>
</dbReference>
<sequence>MKISQIEKKKHLYLIKLDNGDSLTVTEDTIVTFMLSKHMVIDSQQWEDIKSFAQFSYGKSKALGFIAFQQRSQKQVQDYLLKHQISPDLIPSIIDSLKQGKWIDDQQYVDTYIRQNSLTGDKGPLLLKQKLMLKGIASQLIEPVLAQTDFSSIAQKAAEKIYQKYQHKLPSKALTDKIIQGLLNKGFSYDLAKGIVSQLSLEQDSQHIEDLLDQEFDKLLRKYSRRYDGYQLKQKLYQALYRKGYDSDDITTKLNDYF</sequence>
<organism>
    <name type="scientific">Streptococcus equi subsp. equi (strain 4047)</name>
    <dbReference type="NCBI Taxonomy" id="553482"/>
    <lineage>
        <taxon>Bacteria</taxon>
        <taxon>Bacillati</taxon>
        <taxon>Bacillota</taxon>
        <taxon>Bacilli</taxon>
        <taxon>Lactobacillales</taxon>
        <taxon>Streptococcaceae</taxon>
        <taxon>Streptococcus</taxon>
    </lineage>
</organism>